<reference key="1">
    <citation type="journal article" date="1988" name="J. Mol. Biol.">
        <title>Two calmodulin genes are expressed in Arbacia punctulata. An ancient gene duplication is indicated.</title>
        <authorList>
            <person name="Hardy D.O."/>
            <person name="Bender P.K."/>
            <person name="Kretsinger R.H."/>
        </authorList>
    </citation>
    <scope>NUCLEOTIDE SEQUENCE [MRNA]</scope>
</reference>
<keyword id="KW-0106">Calcium</keyword>
<keyword id="KW-0479">Metal-binding</keyword>
<keyword id="KW-0677">Repeat</keyword>
<proteinExistence type="evidence at transcript level"/>
<dbReference type="PIR" id="S02691">
    <property type="entry name" value="S02691"/>
</dbReference>
<dbReference type="BMRB" id="P05932"/>
<dbReference type="SMR" id="P05932"/>
<dbReference type="GO" id="GO:0016460">
    <property type="term" value="C:myosin II complex"/>
    <property type="evidence" value="ECO:0007669"/>
    <property type="project" value="TreeGrafter"/>
</dbReference>
<dbReference type="GO" id="GO:0005509">
    <property type="term" value="F:calcium ion binding"/>
    <property type="evidence" value="ECO:0007669"/>
    <property type="project" value="InterPro"/>
</dbReference>
<dbReference type="CDD" id="cd00051">
    <property type="entry name" value="EFh"/>
    <property type="match status" value="2"/>
</dbReference>
<dbReference type="FunFam" id="1.10.238.10:FF:000003">
    <property type="entry name" value="Calmodulin A"/>
    <property type="match status" value="1"/>
</dbReference>
<dbReference type="Gene3D" id="1.10.238.10">
    <property type="entry name" value="EF-hand"/>
    <property type="match status" value="3"/>
</dbReference>
<dbReference type="InterPro" id="IPR050230">
    <property type="entry name" value="CALM/Myosin/TropC-like"/>
</dbReference>
<dbReference type="InterPro" id="IPR011992">
    <property type="entry name" value="EF-hand-dom_pair"/>
</dbReference>
<dbReference type="InterPro" id="IPR018247">
    <property type="entry name" value="EF_Hand_1_Ca_BS"/>
</dbReference>
<dbReference type="InterPro" id="IPR002048">
    <property type="entry name" value="EF_hand_dom"/>
</dbReference>
<dbReference type="PANTHER" id="PTHR23048:SF0">
    <property type="entry name" value="CALMODULIN LIKE 3"/>
    <property type="match status" value="1"/>
</dbReference>
<dbReference type="PANTHER" id="PTHR23048">
    <property type="entry name" value="MYOSIN LIGHT CHAIN 1, 3"/>
    <property type="match status" value="1"/>
</dbReference>
<dbReference type="Pfam" id="PF13499">
    <property type="entry name" value="EF-hand_7"/>
    <property type="match status" value="2"/>
</dbReference>
<dbReference type="SMART" id="SM00054">
    <property type="entry name" value="EFh"/>
    <property type="match status" value="4"/>
</dbReference>
<dbReference type="SUPFAM" id="SSF47473">
    <property type="entry name" value="EF-hand"/>
    <property type="match status" value="1"/>
</dbReference>
<dbReference type="PROSITE" id="PS00018">
    <property type="entry name" value="EF_HAND_1"/>
    <property type="match status" value="4"/>
</dbReference>
<dbReference type="PROSITE" id="PS50222">
    <property type="entry name" value="EF_HAND_2"/>
    <property type="match status" value="4"/>
</dbReference>
<evidence type="ECO:0000255" key="1">
    <source>
        <dbReference type="PROSITE-ProRule" id="PRU00448"/>
    </source>
</evidence>
<evidence type="ECO:0000305" key="2"/>
<sequence length="138" mass="15564">EFKEAFSLFDKDGDGTITTKELGTVMRSLGQNPTEAELQDMINEVDADGNGTIDFPEFLTMMARKMKETDSEEEIREAFRVFDKDGNGFISAAELRHVMTNLGEKLTDEEVDEMIREADIDGDGQVNYEEFVAMMTSK</sequence>
<comment type="function">
    <text>Calmodulin mediates the control of a large number of enzymes, ion channels and other proteins by Ca(2+). Among the enzymes to be stimulated by the calmodulin-Ca(2+) complex are a number of protein kinases and phosphatases.</text>
</comment>
<comment type="miscellaneous">
    <text>This protein has four functional calcium-binding sites.</text>
</comment>
<comment type="miscellaneous">
    <text>Arbacia punctulata has two distinct calmodulins isotypes: alpha and beta.</text>
</comment>
<comment type="similarity">
    <text evidence="2">Belongs to the calmodulin family.</text>
</comment>
<feature type="chain" id="PRO_0000198245" description="Calmodulin-beta">
    <location>
        <begin position="1" status="less than"/>
        <end position="138"/>
    </location>
</feature>
<feature type="domain" description="EF-hand 1" evidence="1">
    <location>
        <begin position="1" status="less than"/>
        <end position="32"/>
    </location>
</feature>
<feature type="domain" description="EF-hand 2" evidence="1">
    <location>
        <begin position="33"/>
        <end position="68"/>
    </location>
</feature>
<feature type="domain" description="EF-hand 3" evidence="1">
    <location>
        <begin position="70"/>
        <end position="105"/>
    </location>
</feature>
<feature type="domain" description="EF-hand 4" evidence="1">
    <location>
        <begin position="106"/>
        <end position="138"/>
    </location>
</feature>
<feature type="binding site" evidence="1">
    <location>
        <position position="10"/>
    </location>
    <ligand>
        <name>Ca(2+)</name>
        <dbReference type="ChEBI" id="CHEBI:29108"/>
        <label>1</label>
    </ligand>
</feature>
<feature type="binding site" evidence="1">
    <location>
        <position position="12"/>
    </location>
    <ligand>
        <name>Ca(2+)</name>
        <dbReference type="ChEBI" id="CHEBI:29108"/>
        <label>1</label>
    </ligand>
</feature>
<feature type="binding site" evidence="1">
    <location>
        <position position="14"/>
    </location>
    <ligand>
        <name>Ca(2+)</name>
        <dbReference type="ChEBI" id="CHEBI:29108"/>
        <label>1</label>
    </ligand>
</feature>
<feature type="binding site" evidence="1">
    <location>
        <position position="16"/>
    </location>
    <ligand>
        <name>Ca(2+)</name>
        <dbReference type="ChEBI" id="CHEBI:29108"/>
        <label>1</label>
    </ligand>
</feature>
<feature type="binding site" evidence="1">
    <location>
        <position position="21"/>
    </location>
    <ligand>
        <name>Ca(2+)</name>
        <dbReference type="ChEBI" id="CHEBI:29108"/>
        <label>1</label>
    </ligand>
</feature>
<feature type="binding site" evidence="1">
    <location>
        <position position="46"/>
    </location>
    <ligand>
        <name>Ca(2+)</name>
        <dbReference type="ChEBI" id="CHEBI:29108"/>
        <label>2</label>
    </ligand>
</feature>
<feature type="binding site" evidence="1">
    <location>
        <position position="48"/>
    </location>
    <ligand>
        <name>Ca(2+)</name>
        <dbReference type="ChEBI" id="CHEBI:29108"/>
        <label>2</label>
    </ligand>
</feature>
<feature type="binding site" evidence="1">
    <location>
        <position position="50"/>
    </location>
    <ligand>
        <name>Ca(2+)</name>
        <dbReference type="ChEBI" id="CHEBI:29108"/>
        <label>2</label>
    </ligand>
</feature>
<feature type="binding site" evidence="1">
    <location>
        <position position="52"/>
    </location>
    <ligand>
        <name>Ca(2+)</name>
        <dbReference type="ChEBI" id="CHEBI:29108"/>
        <label>2</label>
    </ligand>
</feature>
<feature type="binding site" evidence="1">
    <location>
        <position position="57"/>
    </location>
    <ligand>
        <name>Ca(2+)</name>
        <dbReference type="ChEBI" id="CHEBI:29108"/>
        <label>2</label>
    </ligand>
</feature>
<feature type="binding site" evidence="1">
    <location>
        <position position="83"/>
    </location>
    <ligand>
        <name>Ca(2+)</name>
        <dbReference type="ChEBI" id="CHEBI:29108"/>
        <label>3</label>
    </ligand>
</feature>
<feature type="binding site" evidence="1">
    <location>
        <position position="85"/>
    </location>
    <ligand>
        <name>Ca(2+)</name>
        <dbReference type="ChEBI" id="CHEBI:29108"/>
        <label>3</label>
    </ligand>
</feature>
<feature type="binding site" evidence="1">
    <location>
        <position position="87"/>
    </location>
    <ligand>
        <name>Ca(2+)</name>
        <dbReference type="ChEBI" id="CHEBI:29108"/>
        <label>3</label>
    </ligand>
</feature>
<feature type="binding site" evidence="1">
    <location>
        <position position="94"/>
    </location>
    <ligand>
        <name>Ca(2+)</name>
        <dbReference type="ChEBI" id="CHEBI:29108"/>
        <label>3</label>
    </ligand>
</feature>
<feature type="binding site" evidence="1">
    <location>
        <position position="119"/>
    </location>
    <ligand>
        <name>Ca(2+)</name>
        <dbReference type="ChEBI" id="CHEBI:29108"/>
        <label>4</label>
    </ligand>
</feature>
<feature type="binding site" evidence="1">
    <location>
        <position position="121"/>
    </location>
    <ligand>
        <name>Ca(2+)</name>
        <dbReference type="ChEBI" id="CHEBI:29108"/>
        <label>4</label>
    </ligand>
</feature>
<feature type="binding site" evidence="1">
    <location>
        <position position="123"/>
    </location>
    <ligand>
        <name>Ca(2+)</name>
        <dbReference type="ChEBI" id="CHEBI:29108"/>
        <label>4</label>
    </ligand>
</feature>
<feature type="binding site" evidence="1">
    <location>
        <position position="125"/>
    </location>
    <ligand>
        <name>Ca(2+)</name>
        <dbReference type="ChEBI" id="CHEBI:29108"/>
        <label>4</label>
    </ligand>
</feature>
<feature type="binding site" evidence="1">
    <location>
        <position position="130"/>
    </location>
    <ligand>
        <name>Ca(2+)</name>
        <dbReference type="ChEBI" id="CHEBI:29108"/>
        <label>4</label>
    </ligand>
</feature>
<feature type="non-terminal residue">
    <location>
        <position position="1"/>
    </location>
</feature>
<organism>
    <name type="scientific">Arbacia punctulata</name>
    <name type="common">Punctuate sea urchin</name>
    <dbReference type="NCBI Taxonomy" id="7641"/>
    <lineage>
        <taxon>Eukaryota</taxon>
        <taxon>Metazoa</taxon>
        <taxon>Echinodermata</taxon>
        <taxon>Eleutherozoa</taxon>
        <taxon>Echinozoa</taxon>
        <taxon>Echinoidea</taxon>
        <taxon>Euechinoidea</taxon>
        <taxon>Echinacea</taxon>
        <taxon>Arbacioida</taxon>
        <taxon>Arbaciidae</taxon>
        <taxon>Arbacia</taxon>
    </lineage>
</organism>
<accession>P05932</accession>
<name>CALMB_ARBPU</name>
<protein>
    <recommendedName>
        <fullName>Calmodulin-beta</fullName>
        <shortName>Cam B</shortName>
    </recommendedName>
</protein>